<accession>Q8FHC4</accession>
<name>YNFC_ECOL6</name>
<feature type="signal peptide" evidence="1">
    <location>
        <begin position="1"/>
        <end position="16"/>
    </location>
</feature>
<feature type="chain" id="PRO_0000036262" description="UPF0257 lipoprotein YnfC">
    <location>
        <begin position="17"/>
        <end position="236"/>
    </location>
</feature>
<feature type="lipid moiety-binding region" description="N-palmitoyl cysteine" evidence="1">
    <location>
        <position position="17"/>
    </location>
</feature>
<feature type="lipid moiety-binding region" description="S-diacylglycerol cysteine" evidence="1">
    <location>
        <position position="17"/>
    </location>
</feature>
<dbReference type="EMBL" id="AE014075">
    <property type="protein sequence ID" value="AAN80435.1"/>
    <property type="status" value="ALT_INIT"/>
    <property type="molecule type" value="Genomic_DNA"/>
</dbReference>
<dbReference type="RefSeq" id="WP_001350228.1">
    <property type="nucleotide sequence ID" value="NZ_CP051263.1"/>
</dbReference>
<dbReference type="SMR" id="Q8FHC4"/>
<dbReference type="KEGG" id="ecc:c1975"/>
<dbReference type="eggNOG" id="ENOG502Z8TA">
    <property type="taxonomic scope" value="Bacteria"/>
</dbReference>
<dbReference type="HOGENOM" id="CLU_1174761_0_0_6"/>
<dbReference type="Proteomes" id="UP000001410">
    <property type="component" value="Chromosome"/>
</dbReference>
<dbReference type="GO" id="GO:0005886">
    <property type="term" value="C:plasma membrane"/>
    <property type="evidence" value="ECO:0007669"/>
    <property type="project" value="UniProtKB-SubCell"/>
</dbReference>
<dbReference type="HAMAP" id="MF_01065">
    <property type="entry name" value="UPF0257"/>
    <property type="match status" value="1"/>
</dbReference>
<dbReference type="InterPro" id="IPR010646">
    <property type="entry name" value="UPF0257"/>
</dbReference>
<dbReference type="NCBIfam" id="NF002798">
    <property type="entry name" value="PRK02939.1"/>
    <property type="match status" value="1"/>
</dbReference>
<dbReference type="Pfam" id="PF06788">
    <property type="entry name" value="UPF0257"/>
    <property type="match status" value="1"/>
</dbReference>
<dbReference type="PROSITE" id="PS51257">
    <property type="entry name" value="PROKAR_LIPOPROTEIN"/>
    <property type="match status" value="1"/>
</dbReference>
<gene>
    <name evidence="1" type="primary">ynfC</name>
    <name type="ordered locus">c1975</name>
</gene>
<comment type="subcellular location">
    <subcellularLocation>
        <location evidence="1">Cell membrane</location>
        <topology evidence="1">Lipid-anchor</topology>
    </subcellularLocation>
</comment>
<comment type="similarity">
    <text evidence="1">Belongs to the UPF0257 family.</text>
</comment>
<comment type="sequence caution" evidence="2">
    <conflict type="erroneous initiation">
        <sequence resource="EMBL-CDS" id="AAN80435"/>
    </conflict>
</comment>
<organism>
    <name type="scientific">Escherichia coli O6:H1 (strain CFT073 / ATCC 700928 / UPEC)</name>
    <dbReference type="NCBI Taxonomy" id="199310"/>
    <lineage>
        <taxon>Bacteria</taxon>
        <taxon>Pseudomonadati</taxon>
        <taxon>Pseudomonadota</taxon>
        <taxon>Gammaproteobacteria</taxon>
        <taxon>Enterobacterales</taxon>
        <taxon>Enterobacteriaceae</taxon>
        <taxon>Escherichia</taxon>
    </lineage>
</organism>
<sequence>MKYKLLPCLLAILLTGCDRTEVTLSFTPEMASFSNEFDFDPLRGPVKDFTQTLMDEQGEVTKRVSGTLSEEGCFDSLELLDLENNTVVALVLDANYYRDAETLEKRVRLQGKCQLAELPSAGVSWETDDNGFVIKASSKQMQMEYRYDDQGYPLGKTTKSNDKTLSVSATPSTDPIKKLDYTAVTLLNNQRVGNVKQSCEYDNHANPVDCQLIIVDEGVKPAVERVYTIKNTIDYY</sequence>
<proteinExistence type="inferred from homology"/>
<reference key="1">
    <citation type="journal article" date="2002" name="Proc. Natl. Acad. Sci. U.S.A.">
        <title>Extensive mosaic structure revealed by the complete genome sequence of uropathogenic Escherichia coli.</title>
        <authorList>
            <person name="Welch R.A."/>
            <person name="Burland V."/>
            <person name="Plunkett G. III"/>
            <person name="Redford P."/>
            <person name="Roesch P."/>
            <person name="Rasko D."/>
            <person name="Buckles E.L."/>
            <person name="Liou S.-R."/>
            <person name="Boutin A."/>
            <person name="Hackett J."/>
            <person name="Stroud D."/>
            <person name="Mayhew G.F."/>
            <person name="Rose D.J."/>
            <person name="Zhou S."/>
            <person name="Schwartz D.C."/>
            <person name="Perna N.T."/>
            <person name="Mobley H.L.T."/>
            <person name="Donnenberg M.S."/>
            <person name="Blattner F.R."/>
        </authorList>
    </citation>
    <scope>NUCLEOTIDE SEQUENCE [LARGE SCALE GENOMIC DNA]</scope>
    <source>
        <strain>CFT073 / ATCC 700928 / UPEC</strain>
    </source>
</reference>
<keyword id="KW-1003">Cell membrane</keyword>
<keyword id="KW-0449">Lipoprotein</keyword>
<keyword id="KW-0472">Membrane</keyword>
<keyword id="KW-0564">Palmitate</keyword>
<keyword id="KW-1185">Reference proteome</keyword>
<keyword id="KW-0732">Signal</keyword>
<protein>
    <recommendedName>
        <fullName evidence="1">UPF0257 lipoprotein YnfC</fullName>
    </recommendedName>
</protein>
<evidence type="ECO:0000255" key="1">
    <source>
        <dbReference type="HAMAP-Rule" id="MF_01065"/>
    </source>
</evidence>
<evidence type="ECO:0000305" key="2"/>